<keyword id="KW-0010">Activator</keyword>
<keyword id="KW-0238">DNA-binding</keyword>
<keyword id="KW-0936">Ethylene signaling pathway</keyword>
<keyword id="KW-0539">Nucleus</keyword>
<keyword id="KW-1185">Reference proteome</keyword>
<keyword id="KW-0804">Transcription</keyword>
<keyword id="KW-0805">Transcription regulation</keyword>
<accession>Q84QC2</accession>
<accession>Q9LMA5</accession>
<name>ERF17_ARATH</name>
<reference key="1">
    <citation type="journal article" date="2000" name="Nature">
        <title>Sequence and analysis of chromosome 1 of the plant Arabidopsis thaliana.</title>
        <authorList>
            <person name="Theologis A."/>
            <person name="Ecker J.R."/>
            <person name="Palm C.J."/>
            <person name="Federspiel N.A."/>
            <person name="Kaul S."/>
            <person name="White O."/>
            <person name="Alonso J."/>
            <person name="Altafi H."/>
            <person name="Araujo R."/>
            <person name="Bowman C.L."/>
            <person name="Brooks S.Y."/>
            <person name="Buehler E."/>
            <person name="Chan A."/>
            <person name="Chao Q."/>
            <person name="Chen H."/>
            <person name="Cheuk R.F."/>
            <person name="Chin C.W."/>
            <person name="Chung M.K."/>
            <person name="Conn L."/>
            <person name="Conway A.B."/>
            <person name="Conway A.R."/>
            <person name="Creasy T.H."/>
            <person name="Dewar K."/>
            <person name="Dunn P."/>
            <person name="Etgu P."/>
            <person name="Feldblyum T.V."/>
            <person name="Feng J.-D."/>
            <person name="Fong B."/>
            <person name="Fujii C.Y."/>
            <person name="Gill J.E."/>
            <person name="Goldsmith A.D."/>
            <person name="Haas B."/>
            <person name="Hansen N.F."/>
            <person name="Hughes B."/>
            <person name="Huizar L."/>
            <person name="Hunter J.L."/>
            <person name="Jenkins J."/>
            <person name="Johnson-Hopson C."/>
            <person name="Khan S."/>
            <person name="Khaykin E."/>
            <person name="Kim C.J."/>
            <person name="Koo H.L."/>
            <person name="Kremenetskaia I."/>
            <person name="Kurtz D.B."/>
            <person name="Kwan A."/>
            <person name="Lam B."/>
            <person name="Langin-Hooper S."/>
            <person name="Lee A."/>
            <person name="Lee J.M."/>
            <person name="Lenz C.A."/>
            <person name="Li J.H."/>
            <person name="Li Y.-P."/>
            <person name="Lin X."/>
            <person name="Liu S.X."/>
            <person name="Liu Z.A."/>
            <person name="Luros J.S."/>
            <person name="Maiti R."/>
            <person name="Marziali A."/>
            <person name="Militscher J."/>
            <person name="Miranda M."/>
            <person name="Nguyen M."/>
            <person name="Nierman W.C."/>
            <person name="Osborne B.I."/>
            <person name="Pai G."/>
            <person name="Peterson J."/>
            <person name="Pham P.K."/>
            <person name="Rizzo M."/>
            <person name="Rooney T."/>
            <person name="Rowley D."/>
            <person name="Sakano H."/>
            <person name="Salzberg S.L."/>
            <person name="Schwartz J.R."/>
            <person name="Shinn P."/>
            <person name="Southwick A.M."/>
            <person name="Sun H."/>
            <person name="Tallon L.J."/>
            <person name="Tambunga G."/>
            <person name="Toriumi M.J."/>
            <person name="Town C.D."/>
            <person name="Utterback T."/>
            <person name="Van Aken S."/>
            <person name="Vaysberg M."/>
            <person name="Vysotskaia V.S."/>
            <person name="Walker M."/>
            <person name="Wu D."/>
            <person name="Yu G."/>
            <person name="Fraser C.M."/>
            <person name="Venter J.C."/>
            <person name="Davis R.W."/>
        </authorList>
    </citation>
    <scope>NUCLEOTIDE SEQUENCE [LARGE SCALE GENOMIC DNA]</scope>
    <source>
        <strain>cv. Columbia</strain>
    </source>
</reference>
<reference key="2">
    <citation type="journal article" date="2017" name="Plant J.">
        <title>Araport11: a complete reannotation of the Arabidopsis thaliana reference genome.</title>
        <authorList>
            <person name="Cheng C.Y."/>
            <person name="Krishnakumar V."/>
            <person name="Chan A.P."/>
            <person name="Thibaud-Nissen F."/>
            <person name="Schobel S."/>
            <person name="Town C.D."/>
        </authorList>
    </citation>
    <scope>GENOME REANNOTATION</scope>
    <source>
        <strain>cv. Columbia</strain>
    </source>
</reference>
<reference key="3">
    <citation type="journal article" date="2003" name="Science">
        <title>Empirical analysis of transcriptional activity in the Arabidopsis genome.</title>
        <authorList>
            <person name="Yamada K."/>
            <person name="Lim J."/>
            <person name="Dale J.M."/>
            <person name="Chen H."/>
            <person name="Shinn P."/>
            <person name="Palm C.J."/>
            <person name="Southwick A.M."/>
            <person name="Wu H.C."/>
            <person name="Kim C.J."/>
            <person name="Nguyen M."/>
            <person name="Pham P.K."/>
            <person name="Cheuk R.F."/>
            <person name="Karlin-Newmann G."/>
            <person name="Liu S.X."/>
            <person name="Lam B."/>
            <person name="Sakano H."/>
            <person name="Wu T."/>
            <person name="Yu G."/>
            <person name="Miranda M."/>
            <person name="Quach H.L."/>
            <person name="Tripp M."/>
            <person name="Chang C.H."/>
            <person name="Lee J.M."/>
            <person name="Toriumi M.J."/>
            <person name="Chan M.M."/>
            <person name="Tang C.C."/>
            <person name="Onodera C.S."/>
            <person name="Deng J.M."/>
            <person name="Akiyama K."/>
            <person name="Ansari Y."/>
            <person name="Arakawa T."/>
            <person name="Banh J."/>
            <person name="Banno F."/>
            <person name="Bowser L."/>
            <person name="Brooks S.Y."/>
            <person name="Carninci P."/>
            <person name="Chao Q."/>
            <person name="Choy N."/>
            <person name="Enju A."/>
            <person name="Goldsmith A.D."/>
            <person name="Gurjal M."/>
            <person name="Hansen N.F."/>
            <person name="Hayashizaki Y."/>
            <person name="Johnson-Hopson C."/>
            <person name="Hsuan V.W."/>
            <person name="Iida K."/>
            <person name="Karnes M."/>
            <person name="Khan S."/>
            <person name="Koesema E."/>
            <person name="Ishida J."/>
            <person name="Jiang P.X."/>
            <person name="Jones T."/>
            <person name="Kawai J."/>
            <person name="Kamiya A."/>
            <person name="Meyers C."/>
            <person name="Nakajima M."/>
            <person name="Narusaka M."/>
            <person name="Seki M."/>
            <person name="Sakurai T."/>
            <person name="Satou M."/>
            <person name="Tamse R."/>
            <person name="Vaysberg M."/>
            <person name="Wallender E.K."/>
            <person name="Wong C."/>
            <person name="Yamamura Y."/>
            <person name="Yuan S."/>
            <person name="Shinozaki K."/>
            <person name="Davis R.W."/>
            <person name="Theologis A."/>
            <person name="Ecker J.R."/>
        </authorList>
    </citation>
    <scope>NUCLEOTIDE SEQUENCE [LARGE SCALE MRNA]</scope>
    <source>
        <strain>cv. Columbia</strain>
    </source>
</reference>
<reference key="4">
    <citation type="journal article" date="2006" name="Plant Physiol.">
        <title>Genome-wide analysis of the ERF gene family in Arabidopsis and rice.</title>
        <authorList>
            <person name="Nakano T."/>
            <person name="Suzuki K."/>
            <person name="Fujimura T."/>
            <person name="Shinshi H."/>
        </authorList>
    </citation>
    <scope>GENE FAMILY</scope>
    <scope>NOMENCLATURE</scope>
</reference>
<organism>
    <name type="scientific">Arabidopsis thaliana</name>
    <name type="common">Mouse-ear cress</name>
    <dbReference type="NCBI Taxonomy" id="3702"/>
    <lineage>
        <taxon>Eukaryota</taxon>
        <taxon>Viridiplantae</taxon>
        <taxon>Streptophyta</taxon>
        <taxon>Embryophyta</taxon>
        <taxon>Tracheophyta</taxon>
        <taxon>Spermatophyta</taxon>
        <taxon>Magnoliopsida</taxon>
        <taxon>eudicotyledons</taxon>
        <taxon>Gunneridae</taxon>
        <taxon>Pentapetalae</taxon>
        <taxon>rosids</taxon>
        <taxon>malvids</taxon>
        <taxon>Brassicales</taxon>
        <taxon>Brassicaceae</taxon>
        <taxon>Camelineae</taxon>
        <taxon>Arabidopsis</taxon>
    </lineage>
</organism>
<gene>
    <name type="primary">ERF017</name>
    <name type="ordered locus">At1g19210</name>
    <name type="ORF">T29M8.8</name>
</gene>
<sequence length="185" mass="20727">MEGSSSSMQSKYKGVRKRKWGKWVSEIRLPNSRERIWLGSYDTPEKAARAFDAALYCLRGNNAKFNFPDNPPVISGGRNLSRSEIREAAARFANSAEDDSSGGAGYEIRQESASTSMDVDSEFLSMLPTVGSGNFASEFGLFPGFDDFSDEYSGDRFREQLSPTQDYYQLGEETYADGSMFLWNF</sequence>
<evidence type="ECO:0000250" key="1"/>
<evidence type="ECO:0000255" key="2">
    <source>
        <dbReference type="PROSITE-ProRule" id="PRU00366"/>
    </source>
</evidence>
<evidence type="ECO:0000305" key="3"/>
<protein>
    <recommendedName>
        <fullName>Ethylene-responsive transcription factor ERF017</fullName>
    </recommendedName>
</protein>
<comment type="function">
    <text evidence="1">Probably acts as a transcriptional activator. Binds to the GCC-box pathogenesis-related promoter element. May be involved in the regulation of gene expression by stress factors and by components of stress signal transduction pathways (By similarity).</text>
</comment>
<comment type="subcellular location">
    <subcellularLocation>
        <location evidence="3">Nucleus</location>
    </subcellularLocation>
</comment>
<comment type="similarity">
    <text evidence="3">Belongs to the AP2/ERF transcription factor family. ERF subfamily.</text>
</comment>
<comment type="sequence caution" evidence="3">
    <conflict type="erroneous initiation">
        <sequence resource="EMBL-CDS" id="AAF82238"/>
    </conflict>
</comment>
<proteinExistence type="evidence at transcript level"/>
<feature type="chain" id="PRO_0000290377" description="Ethylene-responsive transcription factor ERF017">
    <location>
        <begin position="1"/>
        <end position="185"/>
    </location>
</feature>
<feature type="DNA-binding region" description="AP2/ERF" evidence="2">
    <location>
        <begin position="11"/>
        <end position="68"/>
    </location>
</feature>
<dbReference type="EMBL" id="AC069143">
    <property type="protein sequence ID" value="AAF82238.1"/>
    <property type="status" value="ALT_INIT"/>
    <property type="molecule type" value="Genomic_DNA"/>
</dbReference>
<dbReference type="EMBL" id="CP002684">
    <property type="protein sequence ID" value="AEE29818.1"/>
    <property type="molecule type" value="Genomic_DNA"/>
</dbReference>
<dbReference type="EMBL" id="AF332422">
    <property type="protein sequence ID" value="AAG48785.1"/>
    <property type="molecule type" value="mRNA"/>
</dbReference>
<dbReference type="EMBL" id="BT006191">
    <property type="protein sequence ID" value="AAP06820.1"/>
    <property type="molecule type" value="mRNA"/>
</dbReference>
<dbReference type="PIR" id="F86325">
    <property type="entry name" value="F86325"/>
</dbReference>
<dbReference type="RefSeq" id="NP_173355.3">
    <property type="nucleotide sequence ID" value="NM_101779.5"/>
</dbReference>
<dbReference type="BioGRID" id="23743">
    <property type="interactions" value="5"/>
</dbReference>
<dbReference type="FunCoup" id="Q84QC2">
    <property type="interactions" value="37"/>
</dbReference>
<dbReference type="STRING" id="3702.Q84QC2"/>
<dbReference type="PaxDb" id="3702-AT1G19210.1"/>
<dbReference type="EnsemblPlants" id="AT1G19210.1">
    <property type="protein sequence ID" value="AT1G19210.1"/>
    <property type="gene ID" value="AT1G19210"/>
</dbReference>
<dbReference type="GeneID" id="838504"/>
<dbReference type="Gramene" id="AT1G19210.1">
    <property type="protein sequence ID" value="AT1G19210.1"/>
    <property type="gene ID" value="AT1G19210"/>
</dbReference>
<dbReference type="KEGG" id="ath:AT1G19210"/>
<dbReference type="Araport" id="AT1G19210"/>
<dbReference type="TAIR" id="AT1G19210">
    <property type="gene designation" value="ERF017"/>
</dbReference>
<dbReference type="eggNOG" id="ENOG502RZQP">
    <property type="taxonomic scope" value="Eukaryota"/>
</dbReference>
<dbReference type="HOGENOM" id="CLU_063331_2_1_1"/>
<dbReference type="InParanoid" id="Q84QC2"/>
<dbReference type="OMA" id="QFDGSAM"/>
<dbReference type="PhylomeDB" id="Q84QC2"/>
<dbReference type="PRO" id="PR:Q84QC2"/>
<dbReference type="Proteomes" id="UP000006548">
    <property type="component" value="Chromosome 1"/>
</dbReference>
<dbReference type="ExpressionAtlas" id="Q84QC2">
    <property type="expression patterns" value="baseline and differential"/>
</dbReference>
<dbReference type="GO" id="GO:0005634">
    <property type="term" value="C:nucleus"/>
    <property type="evidence" value="ECO:0007669"/>
    <property type="project" value="UniProtKB-SubCell"/>
</dbReference>
<dbReference type="GO" id="GO:0003700">
    <property type="term" value="F:DNA-binding transcription factor activity"/>
    <property type="evidence" value="ECO:0000250"/>
    <property type="project" value="TAIR"/>
</dbReference>
<dbReference type="GO" id="GO:0000976">
    <property type="term" value="F:transcription cis-regulatory region binding"/>
    <property type="evidence" value="ECO:0000353"/>
    <property type="project" value="TAIR"/>
</dbReference>
<dbReference type="GO" id="GO:0009873">
    <property type="term" value="P:ethylene-activated signaling pathway"/>
    <property type="evidence" value="ECO:0007669"/>
    <property type="project" value="UniProtKB-KW"/>
</dbReference>
<dbReference type="CDD" id="cd00018">
    <property type="entry name" value="AP2"/>
    <property type="match status" value="1"/>
</dbReference>
<dbReference type="FunFam" id="3.30.730.10:FF:000001">
    <property type="entry name" value="Ethylene-responsive transcription factor 2"/>
    <property type="match status" value="1"/>
</dbReference>
<dbReference type="Gene3D" id="3.30.730.10">
    <property type="entry name" value="AP2/ERF domain"/>
    <property type="match status" value="1"/>
</dbReference>
<dbReference type="InterPro" id="IPR001471">
    <property type="entry name" value="AP2/ERF_dom"/>
</dbReference>
<dbReference type="InterPro" id="IPR036955">
    <property type="entry name" value="AP2/ERF_dom_sf"/>
</dbReference>
<dbReference type="InterPro" id="IPR051032">
    <property type="entry name" value="AP2/ERF_TF_ERF_subfamily"/>
</dbReference>
<dbReference type="InterPro" id="IPR016177">
    <property type="entry name" value="DNA-bd_dom_sf"/>
</dbReference>
<dbReference type="PANTHER" id="PTHR31985:SF273">
    <property type="entry name" value="ETHYLENE-RESPONSIVE TRANSCRIPTION FACTOR ERF017"/>
    <property type="match status" value="1"/>
</dbReference>
<dbReference type="PANTHER" id="PTHR31985">
    <property type="entry name" value="ETHYLENE-RESPONSIVE TRANSCRIPTION FACTOR ERF042-RELATED"/>
    <property type="match status" value="1"/>
</dbReference>
<dbReference type="Pfam" id="PF00847">
    <property type="entry name" value="AP2"/>
    <property type="match status" value="1"/>
</dbReference>
<dbReference type="PRINTS" id="PR00367">
    <property type="entry name" value="ETHRSPELEMNT"/>
</dbReference>
<dbReference type="SMART" id="SM00380">
    <property type="entry name" value="AP2"/>
    <property type="match status" value="1"/>
</dbReference>
<dbReference type="SUPFAM" id="SSF54171">
    <property type="entry name" value="DNA-binding domain"/>
    <property type="match status" value="1"/>
</dbReference>
<dbReference type="PROSITE" id="PS51032">
    <property type="entry name" value="AP2_ERF"/>
    <property type="match status" value="1"/>
</dbReference>